<reference key="1">
    <citation type="journal article" date="2003" name="Proc. Natl. Acad. Sci. U.S.A.">
        <title>The complete genome sequence of Chromobacterium violaceum reveals remarkable and exploitable bacterial adaptability.</title>
        <authorList>
            <person name="Vasconcelos A.T.R."/>
            <person name="de Almeida D.F."/>
            <person name="Hungria M."/>
            <person name="Guimaraes C.T."/>
            <person name="Antonio R.V."/>
            <person name="Almeida F.C."/>
            <person name="de Almeida L.G.P."/>
            <person name="de Almeida R."/>
            <person name="Alves-Gomes J.A."/>
            <person name="Andrade E.M."/>
            <person name="Araripe J."/>
            <person name="de Araujo M.F.F."/>
            <person name="Astolfi-Filho S."/>
            <person name="Azevedo V."/>
            <person name="Baptista A.J."/>
            <person name="Bataus L.A.M."/>
            <person name="Batista J.S."/>
            <person name="Belo A."/>
            <person name="van den Berg C."/>
            <person name="Bogo M."/>
            <person name="Bonatto S."/>
            <person name="Bordignon J."/>
            <person name="Brigido M.M."/>
            <person name="Brito C.A."/>
            <person name="Brocchi M."/>
            <person name="Burity H.A."/>
            <person name="Camargo A.A."/>
            <person name="Cardoso D.D.P."/>
            <person name="Carneiro N.P."/>
            <person name="Carraro D.M."/>
            <person name="Carvalho C.M.B."/>
            <person name="Cascardo J.C.M."/>
            <person name="Cavada B.S."/>
            <person name="Chueire L.M.O."/>
            <person name="Creczynski-Pasa T.B."/>
            <person name="Cunha-Junior N.C."/>
            <person name="Fagundes N."/>
            <person name="Falcao C.L."/>
            <person name="Fantinatti F."/>
            <person name="Farias I.P."/>
            <person name="Felipe M.S.S."/>
            <person name="Ferrari L.P."/>
            <person name="Ferro J.A."/>
            <person name="Ferro M.I.T."/>
            <person name="Franco G.R."/>
            <person name="Freitas N.S.A."/>
            <person name="Furlan L.R."/>
            <person name="Gazzinelli R.T."/>
            <person name="Gomes E.A."/>
            <person name="Goncalves P.R."/>
            <person name="Grangeiro T.B."/>
            <person name="Grattapaglia D."/>
            <person name="Grisard E.C."/>
            <person name="Hanna E.S."/>
            <person name="Jardim S.N."/>
            <person name="Laurino J."/>
            <person name="Leoi L.C.T."/>
            <person name="Lima L.F.A."/>
            <person name="Loureiro M.F."/>
            <person name="Lyra M.C.C.P."/>
            <person name="Madeira H.M.F."/>
            <person name="Manfio G.P."/>
            <person name="Maranhao A.Q."/>
            <person name="Martins W.S."/>
            <person name="di Mauro S.M.Z."/>
            <person name="de Medeiros S.R.B."/>
            <person name="Meissner R.V."/>
            <person name="Moreira M.A.M."/>
            <person name="Nascimento F.F."/>
            <person name="Nicolas M.F."/>
            <person name="Oliveira J.G."/>
            <person name="Oliveira S.C."/>
            <person name="Paixao R.F.C."/>
            <person name="Parente J.A."/>
            <person name="Pedrosa F.O."/>
            <person name="Pena S.D.J."/>
            <person name="Pereira J.O."/>
            <person name="Pereira M."/>
            <person name="Pinto L.S.R.C."/>
            <person name="Pinto L.S."/>
            <person name="Porto J.I.R."/>
            <person name="Potrich D.P."/>
            <person name="Ramalho-Neto C.E."/>
            <person name="Reis A.M.M."/>
            <person name="Rigo L.U."/>
            <person name="Rondinelli E."/>
            <person name="Santos E.B.P."/>
            <person name="Santos F.R."/>
            <person name="Schneider M.P.C."/>
            <person name="Seuanez H.N."/>
            <person name="Silva A.M.R."/>
            <person name="da Silva A.L.C."/>
            <person name="Silva D.W."/>
            <person name="Silva R."/>
            <person name="Simoes I.C."/>
            <person name="Simon D."/>
            <person name="Soares C.M.A."/>
            <person name="Soares R.B.A."/>
            <person name="Souza E.M."/>
            <person name="Souza K.R.L."/>
            <person name="Souza R.C."/>
            <person name="Steffens M.B.R."/>
            <person name="Steindel M."/>
            <person name="Teixeira S.R."/>
            <person name="Urmenyi T."/>
            <person name="Vettore A."/>
            <person name="Wassem R."/>
            <person name="Zaha A."/>
            <person name="Simpson A.J.G."/>
        </authorList>
    </citation>
    <scope>NUCLEOTIDE SEQUENCE [LARGE SCALE GENOMIC DNA]</scope>
    <source>
        <strain>ATCC 12472 / DSM 30191 / JCM 1249 / CCUG 213 / NBRC 12614 / NCIMB 9131 / NCTC 9757 / MK</strain>
    </source>
</reference>
<proteinExistence type="inferred from homology"/>
<keyword id="KW-0378">Hydrolase</keyword>
<keyword id="KW-0408">Iron</keyword>
<keyword id="KW-0479">Metal-binding</keyword>
<keyword id="KW-0648">Protein biosynthesis</keyword>
<keyword id="KW-1185">Reference proteome</keyword>
<feature type="chain" id="PRO_0000082765" description="Peptide deformylase">
    <location>
        <begin position="1"/>
        <end position="167"/>
    </location>
</feature>
<feature type="active site" evidence="1">
    <location>
        <position position="134"/>
    </location>
</feature>
<feature type="binding site" evidence="1">
    <location>
        <position position="91"/>
    </location>
    <ligand>
        <name>Fe cation</name>
        <dbReference type="ChEBI" id="CHEBI:24875"/>
    </ligand>
</feature>
<feature type="binding site" evidence="1">
    <location>
        <position position="133"/>
    </location>
    <ligand>
        <name>Fe cation</name>
        <dbReference type="ChEBI" id="CHEBI:24875"/>
    </ligand>
</feature>
<feature type="binding site" evidence="1">
    <location>
        <position position="137"/>
    </location>
    <ligand>
        <name>Fe cation</name>
        <dbReference type="ChEBI" id="CHEBI:24875"/>
    </ligand>
</feature>
<evidence type="ECO:0000255" key="1">
    <source>
        <dbReference type="HAMAP-Rule" id="MF_00163"/>
    </source>
</evidence>
<comment type="function">
    <text evidence="1">Removes the formyl group from the N-terminal Met of newly synthesized proteins. Requires at least a dipeptide for an efficient rate of reaction. N-terminal L-methionine is a prerequisite for activity but the enzyme has broad specificity at other positions.</text>
</comment>
<comment type="catalytic activity">
    <reaction evidence="1">
        <text>N-terminal N-formyl-L-methionyl-[peptide] + H2O = N-terminal L-methionyl-[peptide] + formate</text>
        <dbReference type="Rhea" id="RHEA:24420"/>
        <dbReference type="Rhea" id="RHEA-COMP:10639"/>
        <dbReference type="Rhea" id="RHEA-COMP:10640"/>
        <dbReference type="ChEBI" id="CHEBI:15377"/>
        <dbReference type="ChEBI" id="CHEBI:15740"/>
        <dbReference type="ChEBI" id="CHEBI:49298"/>
        <dbReference type="ChEBI" id="CHEBI:64731"/>
        <dbReference type="EC" id="3.5.1.88"/>
    </reaction>
</comment>
<comment type="cofactor">
    <cofactor evidence="1">
        <name>Fe(2+)</name>
        <dbReference type="ChEBI" id="CHEBI:29033"/>
    </cofactor>
    <text evidence="1">Binds 1 Fe(2+) ion.</text>
</comment>
<comment type="similarity">
    <text evidence="1">Belongs to the polypeptide deformylase family.</text>
</comment>
<gene>
    <name evidence="1" type="primary">def</name>
    <name type="ordered locus">CV_4265</name>
</gene>
<organism>
    <name type="scientific">Chromobacterium violaceum (strain ATCC 12472 / DSM 30191 / JCM 1249 / CCUG 213 / NBRC 12614 / NCIMB 9131 / NCTC 9757 / MK)</name>
    <dbReference type="NCBI Taxonomy" id="243365"/>
    <lineage>
        <taxon>Bacteria</taxon>
        <taxon>Pseudomonadati</taxon>
        <taxon>Pseudomonadota</taxon>
        <taxon>Betaproteobacteria</taxon>
        <taxon>Neisseriales</taxon>
        <taxon>Chromobacteriaceae</taxon>
        <taxon>Chromobacterium</taxon>
    </lineage>
</organism>
<name>DEF_CHRVO</name>
<protein>
    <recommendedName>
        <fullName evidence="1">Peptide deformylase</fullName>
        <shortName evidence="1">PDF</shortName>
        <ecNumber evidence="1">3.5.1.88</ecNumber>
    </recommendedName>
    <alternativeName>
        <fullName evidence="1">Polypeptide deformylase</fullName>
    </alternativeName>
</protein>
<accession>Q7NQ75</accession>
<sequence>MALLNILHYPDERLHTVAKPVEVFDAALQQQIDDMFETMYEAKGIGLAATQVDYHRRLVVMDISEERDERRVFINPEIVEKDGETVYEEGCLSVPGIYDKVTRAERVKVKAQDRDGKPFELEADGLLAICIQHELDHLNGVVFVERLSQMKQQRIKTKLKKREKQNM</sequence>
<dbReference type="EC" id="3.5.1.88" evidence="1"/>
<dbReference type="EMBL" id="AE016825">
    <property type="protein sequence ID" value="AAQ61925.1"/>
    <property type="molecule type" value="Genomic_DNA"/>
</dbReference>
<dbReference type="RefSeq" id="WP_011137811.1">
    <property type="nucleotide sequence ID" value="NC_005085.1"/>
</dbReference>
<dbReference type="SMR" id="Q7NQ75"/>
<dbReference type="STRING" id="243365.CV_4265"/>
<dbReference type="GeneID" id="66366250"/>
<dbReference type="KEGG" id="cvi:CV_4265"/>
<dbReference type="eggNOG" id="COG0242">
    <property type="taxonomic scope" value="Bacteria"/>
</dbReference>
<dbReference type="HOGENOM" id="CLU_061901_2_1_4"/>
<dbReference type="OrthoDB" id="9804313at2"/>
<dbReference type="Proteomes" id="UP000001424">
    <property type="component" value="Chromosome"/>
</dbReference>
<dbReference type="GO" id="GO:0046872">
    <property type="term" value="F:metal ion binding"/>
    <property type="evidence" value="ECO:0007669"/>
    <property type="project" value="UniProtKB-KW"/>
</dbReference>
<dbReference type="GO" id="GO:0042586">
    <property type="term" value="F:peptide deformylase activity"/>
    <property type="evidence" value="ECO:0007669"/>
    <property type="project" value="UniProtKB-UniRule"/>
</dbReference>
<dbReference type="GO" id="GO:0043686">
    <property type="term" value="P:co-translational protein modification"/>
    <property type="evidence" value="ECO:0007669"/>
    <property type="project" value="TreeGrafter"/>
</dbReference>
<dbReference type="GO" id="GO:0006412">
    <property type="term" value="P:translation"/>
    <property type="evidence" value="ECO:0007669"/>
    <property type="project" value="UniProtKB-UniRule"/>
</dbReference>
<dbReference type="CDD" id="cd00487">
    <property type="entry name" value="Pep_deformylase"/>
    <property type="match status" value="1"/>
</dbReference>
<dbReference type="FunFam" id="3.90.45.10:FF:000001">
    <property type="entry name" value="Peptide deformylase"/>
    <property type="match status" value="1"/>
</dbReference>
<dbReference type="Gene3D" id="3.90.45.10">
    <property type="entry name" value="Peptide deformylase"/>
    <property type="match status" value="1"/>
</dbReference>
<dbReference type="HAMAP" id="MF_00163">
    <property type="entry name" value="Pep_deformylase"/>
    <property type="match status" value="1"/>
</dbReference>
<dbReference type="InterPro" id="IPR023635">
    <property type="entry name" value="Peptide_deformylase"/>
</dbReference>
<dbReference type="InterPro" id="IPR036821">
    <property type="entry name" value="Peptide_deformylase_sf"/>
</dbReference>
<dbReference type="NCBIfam" id="TIGR00079">
    <property type="entry name" value="pept_deformyl"/>
    <property type="match status" value="1"/>
</dbReference>
<dbReference type="NCBIfam" id="NF001159">
    <property type="entry name" value="PRK00150.1-3"/>
    <property type="match status" value="1"/>
</dbReference>
<dbReference type="PANTHER" id="PTHR10458">
    <property type="entry name" value="PEPTIDE DEFORMYLASE"/>
    <property type="match status" value="1"/>
</dbReference>
<dbReference type="PANTHER" id="PTHR10458:SF22">
    <property type="entry name" value="PEPTIDE DEFORMYLASE"/>
    <property type="match status" value="1"/>
</dbReference>
<dbReference type="Pfam" id="PF01327">
    <property type="entry name" value="Pep_deformylase"/>
    <property type="match status" value="1"/>
</dbReference>
<dbReference type="PIRSF" id="PIRSF004749">
    <property type="entry name" value="Pep_def"/>
    <property type="match status" value="1"/>
</dbReference>
<dbReference type="PRINTS" id="PR01576">
    <property type="entry name" value="PDEFORMYLASE"/>
</dbReference>
<dbReference type="SUPFAM" id="SSF56420">
    <property type="entry name" value="Peptide deformylase"/>
    <property type="match status" value="1"/>
</dbReference>